<feature type="signal peptide" evidence="1">
    <location>
        <begin position="1"/>
        <end position="24"/>
    </location>
</feature>
<feature type="propeptide" id="PRO_0000447422" evidence="5">
    <location>
        <begin position="25"/>
        <end position="41"/>
    </location>
</feature>
<feature type="peptide" id="PRO_0000447423" description="U1-sicaritoxin-Sdo1a" evidence="5">
    <location>
        <begin position="42"/>
        <end position="72"/>
    </location>
</feature>
<feature type="disulfide bond" evidence="2 7">
    <location>
        <begin position="43"/>
        <end position="61"/>
    </location>
</feature>
<feature type="disulfide bond" evidence="2 7">
    <location>
        <begin position="50"/>
        <end position="64"/>
    </location>
</feature>
<feature type="disulfide bond" evidence="2 7">
    <location>
        <begin position="60"/>
        <end position="69"/>
    </location>
</feature>
<feature type="turn" evidence="8">
    <location>
        <begin position="53"/>
        <end position="56"/>
    </location>
</feature>
<feature type="strand" evidence="8">
    <location>
        <begin position="61"/>
        <end position="65"/>
    </location>
</feature>
<feature type="strand" evidence="8">
    <location>
        <begin position="68"/>
        <end position="70"/>
    </location>
</feature>
<organism>
    <name type="scientific">Hexophthalma dolichocephala</name>
    <name type="common">Afrotropical spider</name>
    <name type="synonym">Sicarius dolichocephalus</name>
    <dbReference type="NCBI Taxonomy" id="2599099"/>
    <lineage>
        <taxon>Eukaryota</taxon>
        <taxon>Metazoa</taxon>
        <taxon>Ecdysozoa</taxon>
        <taxon>Arthropoda</taxon>
        <taxon>Chelicerata</taxon>
        <taxon>Arachnida</taxon>
        <taxon>Araneae</taxon>
        <taxon>Araneomorphae</taxon>
        <taxon>Haplogynae</taxon>
        <taxon>Scytodoidea</taxon>
        <taxon>Sicariidae</taxon>
        <taxon>Hexophthalma</taxon>
    </lineage>
</organism>
<name>KNO64_HEXDO</name>
<comment type="subcellular location">
    <subcellularLocation>
        <location evidence="5">Secreted</location>
    </subcellularLocation>
</comment>
<comment type="tissue specificity">
    <text evidence="5">Expressed by the venom gland.</text>
</comment>
<comment type="domain">
    <text evidence="2">The presence of a 'disulfide through disulfide knot' structurally defines this protein as a knottin.</text>
</comment>
<comment type="caution">
    <text evidence="5">For expression reasons, the sequence was engineered with a Gly residue instead of a Pro at position 79.</text>
</comment>
<comment type="online information" name="Biological Magnetic Resonance Data Bank">
    <link uri="https://bmrb.io/data_library/summary/index.php?bmrbId=18729"/>
</comment>
<evidence type="ECO:0000255" key="1"/>
<evidence type="ECO:0000269" key="2">
    <source>
    </source>
</evidence>
<evidence type="ECO:0000303" key="3">
    <source>
    </source>
</evidence>
<evidence type="ECO:0000305" key="4"/>
<evidence type="ECO:0000305" key="5">
    <source>
    </source>
</evidence>
<evidence type="ECO:0000312" key="6">
    <source>
        <dbReference type="PDB" id="4B2V"/>
    </source>
</evidence>
<evidence type="ECO:0007744" key="7">
    <source>
        <dbReference type="PDB" id="4B2V"/>
    </source>
</evidence>
<evidence type="ECO:0007829" key="8">
    <source>
        <dbReference type="PDB" id="4B2V"/>
    </source>
</evidence>
<proteinExistence type="evidence at protein level"/>
<dbReference type="PDB" id="4B2V">
    <property type="method" value="NMR"/>
    <property type="chains" value="A=41-72"/>
</dbReference>
<dbReference type="PDBsum" id="4B2V"/>
<dbReference type="SMR" id="M1E1F1"/>
<dbReference type="ArachnoServer" id="AS001805">
    <property type="toxin name" value="U1-sicaritoxin-Sdo1a"/>
</dbReference>
<dbReference type="EvolutionaryTrace" id="M1E1F1"/>
<dbReference type="GO" id="GO:0005576">
    <property type="term" value="C:extracellular region"/>
    <property type="evidence" value="ECO:0007669"/>
    <property type="project" value="UniProtKB-SubCell"/>
</dbReference>
<sequence length="72" mass="8222">MMKKFTCFLLCATILCAIFCVSVAEKFHKMKSDIERDETPMECVENGGFCPDPEKMGDWCCGRCIRNECRNG</sequence>
<accession>M1E1F1</accession>
<reference key="1">
    <citation type="journal article" date="2013" name="PLoS ONE">
        <title>Solution structures of two homologous venom peptides from Sicarius dolichocephalus.</title>
        <authorList>
            <person name="Loening N.M."/>
            <person name="Wilson Z.N."/>
            <person name="Zobel-Thropp P.A."/>
            <person name="Binford G.J."/>
        </authorList>
    </citation>
    <scope>NUCLEOTIDE SEQUENCE [MRNA]</scope>
    <scope>STRUCTURE BY NMR OF 42-72</scope>
    <scope>DISULFIDE BOND</scope>
    <source>
        <tissue>Venom gland</tissue>
    </source>
</reference>
<protein>
    <recommendedName>
        <fullName evidence="4">U1-sicaritoxin-Sdo1a</fullName>
        <shortName evidence="4">U1-SCRTX-Sdo1a</shortName>
    </recommendedName>
    <alternativeName>
        <fullName evidence="6">S64</fullName>
    </alternativeName>
    <alternativeName>
        <fullName evidence="3">U1-sicaritoxin-Sd1a</fullName>
        <shortName evidence="3">U1-SCRTX-Sd1a</shortName>
    </alternativeName>
</protein>
<keyword id="KW-0002">3D-structure</keyword>
<keyword id="KW-1015">Disulfide bond</keyword>
<keyword id="KW-0960">Knottin</keyword>
<keyword id="KW-0964">Secreted</keyword>
<keyword id="KW-0732">Signal</keyword>